<gene>
    <name evidence="1" type="primary">rpsM</name>
    <name type="ordered locus">COXBURSA331_A0359</name>
</gene>
<name>RS13_COXBR</name>
<evidence type="ECO:0000255" key="1">
    <source>
        <dbReference type="HAMAP-Rule" id="MF_01315"/>
    </source>
</evidence>
<evidence type="ECO:0000256" key="2">
    <source>
        <dbReference type="SAM" id="MobiDB-lite"/>
    </source>
</evidence>
<evidence type="ECO:0000305" key="3"/>
<accession>A9NAZ2</accession>
<dbReference type="EMBL" id="CP000890">
    <property type="protein sequence ID" value="ABX77704.1"/>
    <property type="molecule type" value="Genomic_DNA"/>
</dbReference>
<dbReference type="RefSeq" id="WP_005771503.1">
    <property type="nucleotide sequence ID" value="NC_010117.1"/>
</dbReference>
<dbReference type="SMR" id="A9NAZ2"/>
<dbReference type="KEGG" id="cbs:COXBURSA331_A0359"/>
<dbReference type="HOGENOM" id="CLU_103849_1_2_6"/>
<dbReference type="GO" id="GO:0005829">
    <property type="term" value="C:cytosol"/>
    <property type="evidence" value="ECO:0007669"/>
    <property type="project" value="TreeGrafter"/>
</dbReference>
<dbReference type="GO" id="GO:0015935">
    <property type="term" value="C:small ribosomal subunit"/>
    <property type="evidence" value="ECO:0007669"/>
    <property type="project" value="TreeGrafter"/>
</dbReference>
<dbReference type="GO" id="GO:0019843">
    <property type="term" value="F:rRNA binding"/>
    <property type="evidence" value="ECO:0007669"/>
    <property type="project" value="UniProtKB-UniRule"/>
</dbReference>
<dbReference type="GO" id="GO:0003735">
    <property type="term" value="F:structural constituent of ribosome"/>
    <property type="evidence" value="ECO:0007669"/>
    <property type="project" value="InterPro"/>
</dbReference>
<dbReference type="GO" id="GO:0000049">
    <property type="term" value="F:tRNA binding"/>
    <property type="evidence" value="ECO:0007669"/>
    <property type="project" value="UniProtKB-UniRule"/>
</dbReference>
<dbReference type="GO" id="GO:0006412">
    <property type="term" value="P:translation"/>
    <property type="evidence" value="ECO:0007669"/>
    <property type="project" value="UniProtKB-UniRule"/>
</dbReference>
<dbReference type="FunFam" id="1.10.8.50:FF:000001">
    <property type="entry name" value="30S ribosomal protein S13"/>
    <property type="match status" value="1"/>
</dbReference>
<dbReference type="Gene3D" id="1.10.8.50">
    <property type="match status" value="1"/>
</dbReference>
<dbReference type="Gene3D" id="4.10.910.10">
    <property type="entry name" value="30s ribosomal protein s13, domain 2"/>
    <property type="match status" value="1"/>
</dbReference>
<dbReference type="HAMAP" id="MF_01315">
    <property type="entry name" value="Ribosomal_uS13"/>
    <property type="match status" value="1"/>
</dbReference>
<dbReference type="InterPro" id="IPR027437">
    <property type="entry name" value="Rbsml_uS13_C"/>
</dbReference>
<dbReference type="InterPro" id="IPR001892">
    <property type="entry name" value="Ribosomal_uS13"/>
</dbReference>
<dbReference type="InterPro" id="IPR010979">
    <property type="entry name" value="Ribosomal_uS13-like_H2TH"/>
</dbReference>
<dbReference type="InterPro" id="IPR019980">
    <property type="entry name" value="Ribosomal_uS13_bac-type"/>
</dbReference>
<dbReference type="InterPro" id="IPR018269">
    <property type="entry name" value="Ribosomal_uS13_CS"/>
</dbReference>
<dbReference type="NCBIfam" id="TIGR03631">
    <property type="entry name" value="uS13_bact"/>
    <property type="match status" value="1"/>
</dbReference>
<dbReference type="PANTHER" id="PTHR10871">
    <property type="entry name" value="30S RIBOSOMAL PROTEIN S13/40S RIBOSOMAL PROTEIN S18"/>
    <property type="match status" value="1"/>
</dbReference>
<dbReference type="PANTHER" id="PTHR10871:SF1">
    <property type="entry name" value="SMALL RIBOSOMAL SUBUNIT PROTEIN US13M"/>
    <property type="match status" value="1"/>
</dbReference>
<dbReference type="Pfam" id="PF00416">
    <property type="entry name" value="Ribosomal_S13"/>
    <property type="match status" value="1"/>
</dbReference>
<dbReference type="PIRSF" id="PIRSF002134">
    <property type="entry name" value="Ribosomal_S13"/>
    <property type="match status" value="1"/>
</dbReference>
<dbReference type="SUPFAM" id="SSF46946">
    <property type="entry name" value="S13-like H2TH domain"/>
    <property type="match status" value="1"/>
</dbReference>
<dbReference type="PROSITE" id="PS00646">
    <property type="entry name" value="RIBOSOMAL_S13_1"/>
    <property type="match status" value="1"/>
</dbReference>
<dbReference type="PROSITE" id="PS50159">
    <property type="entry name" value="RIBOSOMAL_S13_2"/>
    <property type="match status" value="1"/>
</dbReference>
<reference key="1">
    <citation type="submission" date="2007-11" db="EMBL/GenBank/DDBJ databases">
        <title>Genome sequencing of phylogenetically and phenotypically diverse Coxiella burnetii isolates.</title>
        <authorList>
            <person name="Seshadri R."/>
            <person name="Samuel J.E."/>
        </authorList>
    </citation>
    <scope>NUCLEOTIDE SEQUENCE [LARGE SCALE GENOMIC DNA]</scope>
    <source>
        <strain>RSA 331 / Henzerling II</strain>
    </source>
</reference>
<proteinExistence type="inferred from homology"/>
<feature type="chain" id="PRO_1000086237" description="Small ribosomal subunit protein uS13">
    <location>
        <begin position="1"/>
        <end position="119"/>
    </location>
</feature>
<feature type="region of interest" description="Disordered" evidence="2">
    <location>
        <begin position="90"/>
        <end position="119"/>
    </location>
</feature>
<feature type="compositionally biased region" description="Basic residues" evidence="2">
    <location>
        <begin position="91"/>
        <end position="119"/>
    </location>
</feature>
<organism>
    <name type="scientific">Coxiella burnetii (strain RSA 331 / Henzerling II)</name>
    <dbReference type="NCBI Taxonomy" id="360115"/>
    <lineage>
        <taxon>Bacteria</taxon>
        <taxon>Pseudomonadati</taxon>
        <taxon>Pseudomonadota</taxon>
        <taxon>Gammaproteobacteria</taxon>
        <taxon>Legionellales</taxon>
        <taxon>Coxiellaceae</taxon>
        <taxon>Coxiella</taxon>
    </lineage>
</organism>
<comment type="function">
    <text evidence="1">Located at the top of the head of the 30S subunit, it contacts several helices of the 16S rRNA. In the 70S ribosome it contacts the 23S rRNA (bridge B1a) and protein L5 of the 50S subunit (bridge B1b), connecting the 2 subunits; these bridges are implicated in subunit movement. Contacts the tRNAs in the A and P-sites.</text>
</comment>
<comment type="subunit">
    <text evidence="1">Part of the 30S ribosomal subunit. Forms a loose heterodimer with protein S19. Forms two bridges to the 50S subunit in the 70S ribosome.</text>
</comment>
<comment type="similarity">
    <text evidence="1">Belongs to the universal ribosomal protein uS13 family.</text>
</comment>
<sequence length="119" mass="13420">MAARIAGVNIPVQKHARIALQAIYGIGNSRALEICKEAKIDPATKVKDLSEAELDALRTEVGKFSVEGDLRRERSMDIKRKMDLGTYEGIRHRRGLPLRGQRTRSNARTRKGKRKPIRS</sequence>
<keyword id="KW-0687">Ribonucleoprotein</keyword>
<keyword id="KW-0689">Ribosomal protein</keyword>
<keyword id="KW-0694">RNA-binding</keyword>
<keyword id="KW-0699">rRNA-binding</keyword>
<keyword id="KW-0820">tRNA-binding</keyword>
<protein>
    <recommendedName>
        <fullName evidence="1">Small ribosomal subunit protein uS13</fullName>
    </recommendedName>
    <alternativeName>
        <fullName evidence="3">30S ribosomal protein S13</fullName>
    </alternativeName>
</protein>